<dbReference type="EMBL" id="CP000155">
    <property type="protein sequence ID" value="ABC32873.1"/>
    <property type="molecule type" value="Genomic_DNA"/>
</dbReference>
<dbReference type="RefSeq" id="WP_011399931.1">
    <property type="nucleotide sequence ID" value="NC_007645.1"/>
</dbReference>
<dbReference type="SMR" id="Q2S901"/>
<dbReference type="STRING" id="349521.HCH_06228"/>
<dbReference type="KEGG" id="hch:HCH_06228"/>
<dbReference type="eggNOG" id="COG0080">
    <property type="taxonomic scope" value="Bacteria"/>
</dbReference>
<dbReference type="HOGENOM" id="CLU_074237_2_0_6"/>
<dbReference type="OrthoDB" id="9802408at2"/>
<dbReference type="Proteomes" id="UP000000238">
    <property type="component" value="Chromosome"/>
</dbReference>
<dbReference type="GO" id="GO:0022625">
    <property type="term" value="C:cytosolic large ribosomal subunit"/>
    <property type="evidence" value="ECO:0007669"/>
    <property type="project" value="TreeGrafter"/>
</dbReference>
<dbReference type="GO" id="GO:0070180">
    <property type="term" value="F:large ribosomal subunit rRNA binding"/>
    <property type="evidence" value="ECO:0007669"/>
    <property type="project" value="UniProtKB-UniRule"/>
</dbReference>
<dbReference type="GO" id="GO:0003735">
    <property type="term" value="F:structural constituent of ribosome"/>
    <property type="evidence" value="ECO:0007669"/>
    <property type="project" value="InterPro"/>
</dbReference>
<dbReference type="GO" id="GO:0006412">
    <property type="term" value="P:translation"/>
    <property type="evidence" value="ECO:0007669"/>
    <property type="project" value="UniProtKB-UniRule"/>
</dbReference>
<dbReference type="CDD" id="cd00349">
    <property type="entry name" value="Ribosomal_L11"/>
    <property type="match status" value="1"/>
</dbReference>
<dbReference type="FunFam" id="1.10.10.250:FF:000001">
    <property type="entry name" value="50S ribosomal protein L11"/>
    <property type="match status" value="1"/>
</dbReference>
<dbReference type="FunFam" id="3.30.1550.10:FF:000001">
    <property type="entry name" value="50S ribosomal protein L11"/>
    <property type="match status" value="1"/>
</dbReference>
<dbReference type="Gene3D" id="1.10.10.250">
    <property type="entry name" value="Ribosomal protein L11, C-terminal domain"/>
    <property type="match status" value="1"/>
</dbReference>
<dbReference type="Gene3D" id="3.30.1550.10">
    <property type="entry name" value="Ribosomal protein L11/L12, N-terminal domain"/>
    <property type="match status" value="1"/>
</dbReference>
<dbReference type="HAMAP" id="MF_00736">
    <property type="entry name" value="Ribosomal_uL11"/>
    <property type="match status" value="1"/>
</dbReference>
<dbReference type="InterPro" id="IPR000911">
    <property type="entry name" value="Ribosomal_uL11"/>
</dbReference>
<dbReference type="InterPro" id="IPR006519">
    <property type="entry name" value="Ribosomal_uL11_bac-typ"/>
</dbReference>
<dbReference type="InterPro" id="IPR020783">
    <property type="entry name" value="Ribosomal_uL11_C"/>
</dbReference>
<dbReference type="InterPro" id="IPR036769">
    <property type="entry name" value="Ribosomal_uL11_C_sf"/>
</dbReference>
<dbReference type="InterPro" id="IPR020784">
    <property type="entry name" value="Ribosomal_uL11_N"/>
</dbReference>
<dbReference type="InterPro" id="IPR036796">
    <property type="entry name" value="Ribosomal_uL11_N_sf"/>
</dbReference>
<dbReference type="NCBIfam" id="TIGR01632">
    <property type="entry name" value="L11_bact"/>
    <property type="match status" value="1"/>
</dbReference>
<dbReference type="PANTHER" id="PTHR11661">
    <property type="entry name" value="60S RIBOSOMAL PROTEIN L12"/>
    <property type="match status" value="1"/>
</dbReference>
<dbReference type="PANTHER" id="PTHR11661:SF1">
    <property type="entry name" value="LARGE RIBOSOMAL SUBUNIT PROTEIN UL11M"/>
    <property type="match status" value="1"/>
</dbReference>
<dbReference type="Pfam" id="PF00298">
    <property type="entry name" value="Ribosomal_L11"/>
    <property type="match status" value="1"/>
</dbReference>
<dbReference type="Pfam" id="PF03946">
    <property type="entry name" value="Ribosomal_L11_N"/>
    <property type="match status" value="1"/>
</dbReference>
<dbReference type="SMART" id="SM00649">
    <property type="entry name" value="RL11"/>
    <property type="match status" value="1"/>
</dbReference>
<dbReference type="SUPFAM" id="SSF54747">
    <property type="entry name" value="Ribosomal L11/L12e N-terminal domain"/>
    <property type="match status" value="1"/>
</dbReference>
<dbReference type="SUPFAM" id="SSF46906">
    <property type="entry name" value="Ribosomal protein L11, C-terminal domain"/>
    <property type="match status" value="1"/>
</dbReference>
<dbReference type="PROSITE" id="PS00359">
    <property type="entry name" value="RIBOSOMAL_L11"/>
    <property type="match status" value="1"/>
</dbReference>
<keyword id="KW-0488">Methylation</keyword>
<keyword id="KW-1185">Reference proteome</keyword>
<keyword id="KW-0687">Ribonucleoprotein</keyword>
<keyword id="KW-0689">Ribosomal protein</keyword>
<keyword id="KW-0694">RNA-binding</keyword>
<keyword id="KW-0699">rRNA-binding</keyword>
<evidence type="ECO:0000255" key="1">
    <source>
        <dbReference type="HAMAP-Rule" id="MF_00736"/>
    </source>
</evidence>
<evidence type="ECO:0000305" key="2"/>
<comment type="function">
    <text evidence="1">Forms part of the ribosomal stalk which helps the ribosome interact with GTP-bound translation factors.</text>
</comment>
<comment type="subunit">
    <text evidence="1">Part of the ribosomal stalk of the 50S ribosomal subunit. Interacts with L10 and the large rRNA to form the base of the stalk. L10 forms an elongated spine to which L12 dimers bind in a sequential fashion forming a multimeric L10(L12)X complex.</text>
</comment>
<comment type="PTM">
    <text evidence="1">One or more lysine residues are methylated.</text>
</comment>
<comment type="similarity">
    <text evidence="1">Belongs to the universal ribosomal protein uL11 family.</text>
</comment>
<name>RL11_HAHCH</name>
<feature type="chain" id="PRO_0000258160" description="Large ribosomal subunit protein uL11">
    <location>
        <begin position="1"/>
        <end position="142"/>
    </location>
</feature>
<proteinExistence type="inferred from homology"/>
<reference key="1">
    <citation type="journal article" date="2005" name="Nucleic Acids Res.">
        <title>Genomic blueprint of Hahella chejuensis, a marine microbe producing an algicidal agent.</title>
        <authorList>
            <person name="Jeong H."/>
            <person name="Yim J.H."/>
            <person name="Lee C."/>
            <person name="Choi S.-H."/>
            <person name="Park Y.K."/>
            <person name="Yoon S.H."/>
            <person name="Hur C.-G."/>
            <person name="Kang H.-Y."/>
            <person name="Kim D."/>
            <person name="Lee H.H."/>
            <person name="Park K.H."/>
            <person name="Park S.-H."/>
            <person name="Park H.-S."/>
            <person name="Lee H.K."/>
            <person name="Oh T.K."/>
            <person name="Kim J.F."/>
        </authorList>
    </citation>
    <scope>NUCLEOTIDE SEQUENCE [LARGE SCALE GENOMIC DNA]</scope>
    <source>
        <strain>KCTC 2396</strain>
    </source>
</reference>
<accession>Q2S901</accession>
<organism>
    <name type="scientific">Hahella chejuensis (strain KCTC 2396)</name>
    <dbReference type="NCBI Taxonomy" id="349521"/>
    <lineage>
        <taxon>Bacteria</taxon>
        <taxon>Pseudomonadati</taxon>
        <taxon>Pseudomonadota</taxon>
        <taxon>Gammaproteobacteria</taxon>
        <taxon>Oceanospirillales</taxon>
        <taxon>Hahellaceae</taxon>
        <taxon>Hahella</taxon>
    </lineage>
</organism>
<sequence length="142" mass="14930">MAKKVNAYIKLQVKAGQANPSPPVGPALGQHGVNIMEFCKAFNAKTQNLEPGLPTPVVITVYSDRSFTFITKTPPASVLLRKAAGIKSGSGRPNTEKVGTVNRAQLEEIANVKMPDLSAGSLDAAVRTIAGTARSMGLNVEE</sequence>
<protein>
    <recommendedName>
        <fullName evidence="1">Large ribosomal subunit protein uL11</fullName>
    </recommendedName>
    <alternativeName>
        <fullName evidence="2">50S ribosomal protein L11</fullName>
    </alternativeName>
</protein>
<gene>
    <name evidence="1" type="primary">rplK</name>
    <name type="ordered locus">HCH_06228</name>
</gene>